<accession>Q9U615</accession>
<comment type="catalytic activity">
    <reaction>
        <text>(2R)-2-phosphoglycerate = phosphoenolpyruvate + H2O</text>
        <dbReference type="Rhea" id="RHEA:10164"/>
        <dbReference type="ChEBI" id="CHEBI:15377"/>
        <dbReference type="ChEBI" id="CHEBI:58289"/>
        <dbReference type="ChEBI" id="CHEBI:58702"/>
        <dbReference type="EC" id="4.2.1.11"/>
    </reaction>
</comment>
<comment type="cofactor">
    <cofactor evidence="1">
        <name>Mg(2+)</name>
        <dbReference type="ChEBI" id="CHEBI:18420"/>
    </cofactor>
    <text evidence="1">Mg(2+) is required for catalysis and for stabilizing the dimer.</text>
</comment>
<comment type="pathway">
    <text>Carbohydrate degradation; glycolysis; pyruvate from D-glyceraldehyde 3-phosphate: step 4/5.</text>
</comment>
<comment type="subunit">
    <text evidence="1">Homodimer.</text>
</comment>
<comment type="subcellular location">
    <subcellularLocation>
        <location evidence="1">Cytoplasm</location>
    </subcellularLocation>
</comment>
<comment type="similarity">
    <text evidence="2">Belongs to the enolase family.</text>
</comment>
<sequence length="439" mass="48006">MSTIKSVFAREILDSRGNPTVEVDLTTEKGLFRSAVPSGASTGIYEACELRDGDKSRYLGKGVLKAVENVNKILAPKLIGLDVTKQGEIDRLMLQIDGTENKTHLGANAILGCSMSVCRAAAAFRGLPLYRYIAELSGNKSPMLPLPCFNVINGGEHAGNKLAMQEFMICPTGATSFHEALRMAAETYHNLKLVIKKRYGMDATNVGDEGGFAPNIQANHEGLELIVEAIKQAGYTGKIEIGMDVAASSFWDAKESKYDLGFKVPADKKTPDMLVSGEGLIKLYEEWTSKYPIWSIEDPFDQDDWATYTRFTELIRNRIQIVGDDLLVTNPKRIVEARNKKACNALLLKLNQIGSVSEAVEACRLAREVNWGVMVSHRSGETEDAFIADLVVGLGCGQIKTGAPCRSERLAKYNQLLRIEEELGANAHYAAKTLSGVGH</sequence>
<protein>
    <recommendedName>
        <fullName>Enolase</fullName>
        <ecNumber>4.2.1.11</ecNumber>
    </recommendedName>
    <alternativeName>
        <fullName>2-phospho-D-glycerate hydro-lyase</fullName>
    </alternativeName>
    <alternativeName>
        <fullName>2-phosphoglycerate dehydratase</fullName>
    </alternativeName>
</protein>
<keyword id="KW-0963">Cytoplasm</keyword>
<keyword id="KW-0324">Glycolysis</keyword>
<keyword id="KW-0456">Lyase</keyword>
<keyword id="KW-0460">Magnesium</keyword>
<keyword id="KW-0479">Metal-binding</keyword>
<dbReference type="EC" id="4.2.1.11"/>
<dbReference type="EMBL" id="AF205070">
    <property type="protein sequence ID" value="AAF13454.1"/>
    <property type="molecule type" value="mRNA"/>
</dbReference>
<dbReference type="EMBL" id="AF348478">
    <property type="protein sequence ID" value="AAK31161.1"/>
    <property type="molecule type" value="Genomic_DNA"/>
</dbReference>
<dbReference type="SMR" id="Q9U615"/>
<dbReference type="VEuPathDB" id="AmoebaDB:MBAL_002915"/>
<dbReference type="UniPathway" id="UPA00109">
    <property type="reaction ID" value="UER00187"/>
</dbReference>
<dbReference type="GO" id="GO:0000015">
    <property type="term" value="C:phosphopyruvate hydratase complex"/>
    <property type="evidence" value="ECO:0007669"/>
    <property type="project" value="InterPro"/>
</dbReference>
<dbReference type="GO" id="GO:0000287">
    <property type="term" value="F:magnesium ion binding"/>
    <property type="evidence" value="ECO:0007669"/>
    <property type="project" value="InterPro"/>
</dbReference>
<dbReference type="GO" id="GO:0004634">
    <property type="term" value="F:phosphopyruvate hydratase activity"/>
    <property type="evidence" value="ECO:0007669"/>
    <property type="project" value="UniProtKB-EC"/>
</dbReference>
<dbReference type="GO" id="GO:0006096">
    <property type="term" value="P:glycolytic process"/>
    <property type="evidence" value="ECO:0007669"/>
    <property type="project" value="UniProtKB-UniPathway"/>
</dbReference>
<dbReference type="CDD" id="cd03313">
    <property type="entry name" value="enolase"/>
    <property type="match status" value="1"/>
</dbReference>
<dbReference type="FunFam" id="3.30.390.10:FF:000001">
    <property type="entry name" value="Enolase"/>
    <property type="match status" value="1"/>
</dbReference>
<dbReference type="FunFam" id="3.20.20.120:FF:000002">
    <property type="entry name" value="Enolase 1"/>
    <property type="match status" value="1"/>
</dbReference>
<dbReference type="Gene3D" id="3.20.20.120">
    <property type="entry name" value="Enolase-like C-terminal domain"/>
    <property type="match status" value="1"/>
</dbReference>
<dbReference type="Gene3D" id="3.30.390.10">
    <property type="entry name" value="Enolase-like, N-terminal domain"/>
    <property type="match status" value="1"/>
</dbReference>
<dbReference type="HAMAP" id="MF_00318">
    <property type="entry name" value="Enolase"/>
    <property type="match status" value="1"/>
</dbReference>
<dbReference type="InterPro" id="IPR000941">
    <property type="entry name" value="Enolase"/>
</dbReference>
<dbReference type="InterPro" id="IPR036849">
    <property type="entry name" value="Enolase-like_C_sf"/>
</dbReference>
<dbReference type="InterPro" id="IPR029017">
    <property type="entry name" value="Enolase-like_N"/>
</dbReference>
<dbReference type="InterPro" id="IPR020810">
    <property type="entry name" value="Enolase_C"/>
</dbReference>
<dbReference type="InterPro" id="IPR020809">
    <property type="entry name" value="Enolase_CS"/>
</dbReference>
<dbReference type="InterPro" id="IPR020811">
    <property type="entry name" value="Enolase_N"/>
</dbReference>
<dbReference type="NCBIfam" id="TIGR01060">
    <property type="entry name" value="eno"/>
    <property type="match status" value="1"/>
</dbReference>
<dbReference type="PANTHER" id="PTHR11902">
    <property type="entry name" value="ENOLASE"/>
    <property type="match status" value="1"/>
</dbReference>
<dbReference type="PANTHER" id="PTHR11902:SF1">
    <property type="entry name" value="ENOLASE"/>
    <property type="match status" value="1"/>
</dbReference>
<dbReference type="Pfam" id="PF00113">
    <property type="entry name" value="Enolase_C"/>
    <property type="match status" value="1"/>
</dbReference>
<dbReference type="Pfam" id="PF03952">
    <property type="entry name" value="Enolase_N"/>
    <property type="match status" value="1"/>
</dbReference>
<dbReference type="PIRSF" id="PIRSF001400">
    <property type="entry name" value="Enolase"/>
    <property type="match status" value="1"/>
</dbReference>
<dbReference type="PRINTS" id="PR00148">
    <property type="entry name" value="ENOLASE"/>
</dbReference>
<dbReference type="SFLD" id="SFLDF00002">
    <property type="entry name" value="enolase"/>
    <property type="match status" value="1"/>
</dbReference>
<dbReference type="SFLD" id="SFLDG00178">
    <property type="entry name" value="enolase"/>
    <property type="match status" value="1"/>
</dbReference>
<dbReference type="SMART" id="SM01192">
    <property type="entry name" value="Enolase_C"/>
    <property type="match status" value="1"/>
</dbReference>
<dbReference type="SMART" id="SM01193">
    <property type="entry name" value="Enolase_N"/>
    <property type="match status" value="1"/>
</dbReference>
<dbReference type="SUPFAM" id="SSF51604">
    <property type="entry name" value="Enolase C-terminal domain-like"/>
    <property type="match status" value="1"/>
</dbReference>
<dbReference type="SUPFAM" id="SSF54826">
    <property type="entry name" value="Enolase N-terminal domain-like"/>
    <property type="match status" value="1"/>
</dbReference>
<dbReference type="PROSITE" id="PS00164">
    <property type="entry name" value="ENOLASE"/>
    <property type="match status" value="1"/>
</dbReference>
<evidence type="ECO:0000250" key="1"/>
<evidence type="ECO:0000305" key="2"/>
<name>ENO_MASBA</name>
<reference key="1">
    <citation type="submission" date="1999-11" db="EMBL/GenBank/DDBJ databases">
        <title>Enolase from Trypanosoma brucei, from the amitochondriate protist Mastigamoeba balamuthi, and from the chloroplast and cytosol of Euglena gracilis: pieces in the evolutionary puzzle of the eukaryotic glycolytic pathway.</title>
        <authorList>
            <person name="Haennert V."/>
            <person name="Brinkmann H."/>
            <person name="Nowitzki U."/>
            <person name="Lee J.A."/>
            <person name="Albert M.-A."/>
            <person name="Sensen C.W."/>
            <person name="Gaasterland T."/>
            <person name="Muller M."/>
            <person name="Michels P.A.M."/>
            <person name="Martin W."/>
        </authorList>
    </citation>
    <scope>NUCLEOTIDE SEQUENCE</scope>
</reference>
<reference key="2">
    <citation type="submission" date="2001-02" db="EMBL/GenBank/DDBJ databases">
        <title>cDNA clones (expressed sequence tags) from the free-living amitochondriate amoeboflagellate, Mastigamoeba balamuthi.</title>
        <authorList>
            <person name="Lee J.A."/>
            <person name="Moore D.V."/>
            <person name="Gordon P."/>
            <person name="Sensen C.W."/>
            <person name="Gaasterland T."/>
            <person name="Muller M."/>
        </authorList>
    </citation>
    <scope>NUCLEOTIDE SEQUENCE</scope>
    <source>
        <strain>ATCC 30984</strain>
    </source>
</reference>
<feature type="chain" id="PRO_0000134087" description="Enolase">
    <location>
        <begin position="1"/>
        <end position="439"/>
    </location>
</feature>
<feature type="active site" description="Proton donor" evidence="1">
    <location>
        <position position="209"/>
    </location>
</feature>
<feature type="active site" description="Proton acceptor" evidence="1">
    <location>
        <position position="349"/>
    </location>
</feature>
<feature type="binding site" evidence="1">
    <location>
        <position position="157"/>
    </location>
    <ligand>
        <name>substrate</name>
    </ligand>
</feature>
<feature type="binding site" evidence="1">
    <location>
        <position position="166"/>
    </location>
    <ligand>
        <name>substrate</name>
    </ligand>
</feature>
<feature type="binding site" evidence="1">
    <location>
        <position position="244"/>
    </location>
    <ligand>
        <name>Mg(2+)</name>
        <dbReference type="ChEBI" id="CHEBI:18420"/>
    </ligand>
</feature>
<feature type="binding site" evidence="1">
    <location>
        <position position="297"/>
    </location>
    <ligand>
        <name>Mg(2+)</name>
        <dbReference type="ChEBI" id="CHEBI:18420"/>
    </ligand>
</feature>
<feature type="binding site" evidence="1">
    <location>
        <position position="297"/>
    </location>
    <ligand>
        <name>substrate</name>
    </ligand>
</feature>
<feature type="binding site" evidence="1">
    <location>
        <position position="324"/>
    </location>
    <ligand>
        <name>Mg(2+)</name>
        <dbReference type="ChEBI" id="CHEBI:18420"/>
    </ligand>
</feature>
<feature type="binding site" evidence="1">
    <location>
        <position position="324"/>
    </location>
    <ligand>
        <name>substrate</name>
    </ligand>
</feature>
<feature type="binding site" evidence="1">
    <location>
        <begin position="376"/>
        <end position="379"/>
    </location>
    <ligand>
        <name>substrate</name>
    </ligand>
</feature>
<feature type="binding site" evidence="1">
    <location>
        <position position="400"/>
    </location>
    <ligand>
        <name>substrate</name>
    </ligand>
</feature>
<gene>
    <name type="primary">ENOL</name>
</gene>
<proteinExistence type="evidence at transcript level"/>
<organism>
    <name type="scientific">Mastigamoeba balamuthi</name>
    <name type="common">Phreatamoeba balamuthi</name>
    <dbReference type="NCBI Taxonomy" id="108607"/>
    <lineage>
        <taxon>Eukaryota</taxon>
        <taxon>Amoebozoa</taxon>
        <taxon>Evosea</taxon>
        <taxon>Archamoebae</taxon>
        <taxon>Mastigamoebida</taxon>
        <taxon>Mastigamoebidae</taxon>
        <taxon>Mastigamoeba</taxon>
    </lineage>
</organism>